<reference key="1">
    <citation type="journal article" date="1986" name="Nucleic Acids Res.">
        <title>Sequence and expression of the Cc gene, a member of the dopa decarboxylase gene cluster of Drosophila: possible translational regulation.</title>
        <authorList>
            <person name="Eveleth D.D. Jr."/>
            <person name="Marsh J.L."/>
        </authorList>
    </citation>
    <scope>NUCLEOTIDE SEQUENCE [GENOMIC DNA / MRNA]</scope>
    <scope>FUNCTION</scope>
    <scope>DEVELOPMENTAL STAGE</scope>
</reference>
<reference key="2">
    <citation type="journal article" date="2000" name="Science">
        <title>The genome sequence of Drosophila melanogaster.</title>
        <authorList>
            <person name="Adams M.D."/>
            <person name="Celniker S.E."/>
            <person name="Holt R.A."/>
            <person name="Evans C.A."/>
            <person name="Gocayne J.D."/>
            <person name="Amanatides P.G."/>
            <person name="Scherer S.E."/>
            <person name="Li P.W."/>
            <person name="Hoskins R.A."/>
            <person name="Galle R.F."/>
            <person name="George R.A."/>
            <person name="Lewis S.E."/>
            <person name="Richards S."/>
            <person name="Ashburner M."/>
            <person name="Henderson S.N."/>
            <person name="Sutton G.G."/>
            <person name="Wortman J.R."/>
            <person name="Yandell M.D."/>
            <person name="Zhang Q."/>
            <person name="Chen L.X."/>
            <person name="Brandon R.C."/>
            <person name="Rogers Y.-H.C."/>
            <person name="Blazej R.G."/>
            <person name="Champe M."/>
            <person name="Pfeiffer B.D."/>
            <person name="Wan K.H."/>
            <person name="Doyle C."/>
            <person name="Baxter E.G."/>
            <person name="Helt G."/>
            <person name="Nelson C.R."/>
            <person name="Miklos G.L.G."/>
            <person name="Abril J.F."/>
            <person name="Agbayani A."/>
            <person name="An H.-J."/>
            <person name="Andrews-Pfannkoch C."/>
            <person name="Baldwin D."/>
            <person name="Ballew R.M."/>
            <person name="Basu A."/>
            <person name="Baxendale J."/>
            <person name="Bayraktaroglu L."/>
            <person name="Beasley E.M."/>
            <person name="Beeson K.Y."/>
            <person name="Benos P.V."/>
            <person name="Berman B.P."/>
            <person name="Bhandari D."/>
            <person name="Bolshakov S."/>
            <person name="Borkova D."/>
            <person name="Botchan M.R."/>
            <person name="Bouck J."/>
            <person name="Brokstein P."/>
            <person name="Brottier P."/>
            <person name="Burtis K.C."/>
            <person name="Busam D.A."/>
            <person name="Butler H."/>
            <person name="Cadieu E."/>
            <person name="Center A."/>
            <person name="Chandra I."/>
            <person name="Cherry J.M."/>
            <person name="Cawley S."/>
            <person name="Dahlke C."/>
            <person name="Davenport L.B."/>
            <person name="Davies P."/>
            <person name="de Pablos B."/>
            <person name="Delcher A."/>
            <person name="Deng Z."/>
            <person name="Mays A.D."/>
            <person name="Dew I."/>
            <person name="Dietz S.M."/>
            <person name="Dodson K."/>
            <person name="Doup L.E."/>
            <person name="Downes M."/>
            <person name="Dugan-Rocha S."/>
            <person name="Dunkov B.C."/>
            <person name="Dunn P."/>
            <person name="Durbin K.J."/>
            <person name="Evangelista C.C."/>
            <person name="Ferraz C."/>
            <person name="Ferriera S."/>
            <person name="Fleischmann W."/>
            <person name="Fosler C."/>
            <person name="Gabrielian A.E."/>
            <person name="Garg N.S."/>
            <person name="Gelbart W.M."/>
            <person name="Glasser K."/>
            <person name="Glodek A."/>
            <person name="Gong F."/>
            <person name="Gorrell J.H."/>
            <person name="Gu Z."/>
            <person name="Guan P."/>
            <person name="Harris M."/>
            <person name="Harris N.L."/>
            <person name="Harvey D.A."/>
            <person name="Heiman T.J."/>
            <person name="Hernandez J.R."/>
            <person name="Houck J."/>
            <person name="Hostin D."/>
            <person name="Houston K.A."/>
            <person name="Howland T.J."/>
            <person name="Wei M.-H."/>
            <person name="Ibegwam C."/>
            <person name="Jalali M."/>
            <person name="Kalush F."/>
            <person name="Karpen G.H."/>
            <person name="Ke Z."/>
            <person name="Kennison J.A."/>
            <person name="Ketchum K.A."/>
            <person name="Kimmel B.E."/>
            <person name="Kodira C.D."/>
            <person name="Kraft C.L."/>
            <person name="Kravitz S."/>
            <person name="Kulp D."/>
            <person name="Lai Z."/>
            <person name="Lasko P."/>
            <person name="Lei Y."/>
            <person name="Levitsky A.A."/>
            <person name="Li J.H."/>
            <person name="Li Z."/>
            <person name="Liang Y."/>
            <person name="Lin X."/>
            <person name="Liu X."/>
            <person name="Mattei B."/>
            <person name="McIntosh T.C."/>
            <person name="McLeod M.P."/>
            <person name="McPherson D."/>
            <person name="Merkulov G."/>
            <person name="Milshina N.V."/>
            <person name="Mobarry C."/>
            <person name="Morris J."/>
            <person name="Moshrefi A."/>
            <person name="Mount S.M."/>
            <person name="Moy M."/>
            <person name="Murphy B."/>
            <person name="Murphy L."/>
            <person name="Muzny D.M."/>
            <person name="Nelson D.L."/>
            <person name="Nelson D.R."/>
            <person name="Nelson K.A."/>
            <person name="Nixon K."/>
            <person name="Nusskern D.R."/>
            <person name="Pacleb J.M."/>
            <person name="Palazzolo M."/>
            <person name="Pittman G.S."/>
            <person name="Pan S."/>
            <person name="Pollard J."/>
            <person name="Puri V."/>
            <person name="Reese M.G."/>
            <person name="Reinert K."/>
            <person name="Remington K."/>
            <person name="Saunders R.D.C."/>
            <person name="Scheeler F."/>
            <person name="Shen H."/>
            <person name="Shue B.C."/>
            <person name="Siden-Kiamos I."/>
            <person name="Simpson M."/>
            <person name="Skupski M.P."/>
            <person name="Smith T.J."/>
            <person name="Spier E."/>
            <person name="Spradling A.C."/>
            <person name="Stapleton M."/>
            <person name="Strong R."/>
            <person name="Sun E."/>
            <person name="Svirskas R."/>
            <person name="Tector C."/>
            <person name="Turner R."/>
            <person name="Venter E."/>
            <person name="Wang A.H."/>
            <person name="Wang X."/>
            <person name="Wang Z.-Y."/>
            <person name="Wassarman D.A."/>
            <person name="Weinstock G.M."/>
            <person name="Weissenbach J."/>
            <person name="Williams S.M."/>
            <person name="Woodage T."/>
            <person name="Worley K.C."/>
            <person name="Wu D."/>
            <person name="Yang S."/>
            <person name="Yao Q.A."/>
            <person name="Ye J."/>
            <person name="Yeh R.-F."/>
            <person name="Zaveri J.S."/>
            <person name="Zhan M."/>
            <person name="Zhang G."/>
            <person name="Zhao Q."/>
            <person name="Zheng L."/>
            <person name="Zheng X.H."/>
            <person name="Zhong F.N."/>
            <person name="Zhong W."/>
            <person name="Zhou X."/>
            <person name="Zhu S.C."/>
            <person name="Zhu X."/>
            <person name="Smith H.O."/>
            <person name="Gibbs R.A."/>
            <person name="Myers E.W."/>
            <person name="Rubin G.M."/>
            <person name="Venter J.C."/>
        </authorList>
    </citation>
    <scope>NUCLEOTIDE SEQUENCE [LARGE SCALE GENOMIC DNA]</scope>
    <source>
        <strain>Berkeley</strain>
    </source>
</reference>
<reference key="3">
    <citation type="journal article" date="2002" name="Genome Biol.">
        <title>Annotation of the Drosophila melanogaster euchromatic genome: a systematic review.</title>
        <authorList>
            <person name="Misra S."/>
            <person name="Crosby M.A."/>
            <person name="Mungall C.J."/>
            <person name="Matthews B.B."/>
            <person name="Campbell K.S."/>
            <person name="Hradecky P."/>
            <person name="Huang Y."/>
            <person name="Kaminker J.S."/>
            <person name="Millburn G.H."/>
            <person name="Prochnik S.E."/>
            <person name="Smith C.D."/>
            <person name="Tupy J.L."/>
            <person name="Whitfield E.J."/>
            <person name="Bayraktaroglu L."/>
            <person name="Berman B.P."/>
            <person name="Bettencourt B.R."/>
            <person name="Celniker S.E."/>
            <person name="de Grey A.D.N.J."/>
            <person name="Drysdale R.A."/>
            <person name="Harris N.L."/>
            <person name="Richter J."/>
            <person name="Russo S."/>
            <person name="Schroeder A.J."/>
            <person name="Shu S.Q."/>
            <person name="Stapleton M."/>
            <person name="Yamada C."/>
            <person name="Ashburner M."/>
            <person name="Gelbart W.M."/>
            <person name="Rubin G.M."/>
            <person name="Lewis S.E."/>
        </authorList>
    </citation>
    <scope>GENOME REANNOTATION</scope>
    <source>
        <strain>Berkeley</strain>
    </source>
</reference>
<reference key="4">
    <citation type="journal article" date="2002" name="Genome Biol.">
        <title>A Drosophila full-length cDNA resource.</title>
        <authorList>
            <person name="Stapleton M."/>
            <person name="Carlson J.W."/>
            <person name="Brokstein P."/>
            <person name="Yu C."/>
            <person name="Champe M."/>
            <person name="George R.A."/>
            <person name="Guarin H."/>
            <person name="Kronmiller B."/>
            <person name="Pacleb J.M."/>
            <person name="Park S."/>
            <person name="Wan K.H."/>
            <person name="Rubin G.M."/>
            <person name="Celniker S.E."/>
        </authorList>
    </citation>
    <scope>NUCLEOTIDE SEQUENCE [LARGE SCALE MRNA]</scope>
    <source>
        <strain>Berkeley</strain>
        <tissue>Head</tissue>
    </source>
</reference>
<keyword id="KW-0217">Developmental protein</keyword>
<keyword id="KW-1185">Reference proteome</keyword>
<name>PHB1_DROME</name>
<protein>
    <recommendedName>
        <fullName evidence="3">Prohibitin 1</fullName>
    </recommendedName>
    <alternativeName>
        <fullName evidence="2">Protein l(2)37Cc</fullName>
    </alternativeName>
</protein>
<gene>
    <name evidence="4" type="primary">Phb1</name>
    <name evidence="2" type="synonym">l(2)37Cc</name>
    <name evidence="4" type="ORF">CG10691</name>
</gene>
<comment type="function">
    <text evidence="1">Required for larval metabolism or for the progression of the larva into a pupa.</text>
</comment>
<comment type="developmental stage">
    <text evidence="1">Expressed in early embryos, late embryos, late third instar larvae and adults.</text>
</comment>
<comment type="similarity">
    <text evidence="3">Belongs to the prohibitin family.</text>
</comment>
<comment type="sequence caution" evidence="3">
    <conflict type="frameshift">
        <sequence resource="EMBL-CDS" id="CAA27807"/>
    </conflict>
</comment>
<dbReference type="EMBL" id="X04228">
    <property type="protein sequence ID" value="CAA27810.1"/>
    <property type="status" value="ALT_FRAME"/>
    <property type="molecule type" value="mRNA"/>
</dbReference>
<dbReference type="EMBL" id="X04227">
    <property type="protein sequence ID" value="CAA27807.1"/>
    <property type="status" value="ALT_FRAME"/>
    <property type="molecule type" value="Genomic_DNA"/>
</dbReference>
<dbReference type="EMBL" id="AE014134">
    <property type="protein sequence ID" value="AAN11026.1"/>
    <property type="molecule type" value="Genomic_DNA"/>
</dbReference>
<dbReference type="EMBL" id="AY122111">
    <property type="protein sequence ID" value="AAM52623.1"/>
    <property type="molecule type" value="mRNA"/>
</dbReference>
<dbReference type="PIR" id="C25511">
    <property type="entry name" value="C25511"/>
</dbReference>
<dbReference type="RefSeq" id="NP_001163012.2">
    <property type="nucleotide sequence ID" value="NM_001169541.2"/>
</dbReference>
<dbReference type="RefSeq" id="NP_476607.2">
    <property type="nucleotide sequence ID" value="NM_057259.6"/>
</dbReference>
<dbReference type="RefSeq" id="NP_724165.1">
    <property type="nucleotide sequence ID" value="NM_165281.2"/>
</dbReference>
<dbReference type="SMR" id="P24156"/>
<dbReference type="BioGRID" id="72039">
    <property type="interactions" value="26"/>
</dbReference>
<dbReference type="FunCoup" id="P24156">
    <property type="interactions" value="1970"/>
</dbReference>
<dbReference type="IntAct" id="P24156">
    <property type="interactions" value="89"/>
</dbReference>
<dbReference type="MINT" id="P24156"/>
<dbReference type="STRING" id="7227.FBpp0312093"/>
<dbReference type="PaxDb" id="7227-FBpp0080707"/>
<dbReference type="DNASU" id="49168"/>
<dbReference type="EnsemblMetazoa" id="FBtr0081164">
    <property type="protein sequence ID" value="FBpp0080707"/>
    <property type="gene ID" value="FBgn0002031"/>
</dbReference>
<dbReference type="EnsemblMetazoa" id="FBtr0081165">
    <property type="protein sequence ID" value="FBpp0080708"/>
    <property type="gene ID" value="FBgn0002031"/>
</dbReference>
<dbReference type="EnsemblMetazoa" id="FBtr0346428">
    <property type="protein sequence ID" value="FBpp0312093"/>
    <property type="gene ID" value="FBgn0002031"/>
</dbReference>
<dbReference type="GeneID" id="49168"/>
<dbReference type="KEGG" id="dme:Dmel_CG10691"/>
<dbReference type="AGR" id="FB:FBgn0002031"/>
<dbReference type="CTD" id="5245"/>
<dbReference type="FlyBase" id="FBgn0002031">
    <property type="gene designation" value="Phb1"/>
</dbReference>
<dbReference type="VEuPathDB" id="VectorBase:FBgn0002031"/>
<dbReference type="eggNOG" id="KOG3083">
    <property type="taxonomic scope" value="Eukaryota"/>
</dbReference>
<dbReference type="GeneTree" id="ENSGT00950000183070"/>
<dbReference type="HOGENOM" id="CLU_047969_0_0_1"/>
<dbReference type="InParanoid" id="P24156"/>
<dbReference type="OMA" id="YEFRLVT"/>
<dbReference type="OrthoDB" id="275637at2759"/>
<dbReference type="PhylomeDB" id="P24156"/>
<dbReference type="Reactome" id="R-DME-5673000">
    <property type="pathway name" value="RAF activation"/>
</dbReference>
<dbReference type="Reactome" id="R-DME-8949664">
    <property type="pathway name" value="Processing of SMDT1"/>
</dbReference>
<dbReference type="SignaLink" id="P24156"/>
<dbReference type="BioGRID-ORCS" id="49168">
    <property type="hits" value="0 hits in 1 CRISPR screen"/>
</dbReference>
<dbReference type="ChiTaRS" id="l(2)37Cc">
    <property type="organism name" value="fly"/>
</dbReference>
<dbReference type="GenomeRNAi" id="49168"/>
<dbReference type="PRO" id="PR:P24156"/>
<dbReference type="Proteomes" id="UP000000803">
    <property type="component" value="Chromosome 2L"/>
</dbReference>
<dbReference type="Bgee" id="FBgn0002031">
    <property type="expression patterns" value="Expressed in embryonic/larval hemocyte (Drosophila) and 172 other cell types or tissues"/>
</dbReference>
<dbReference type="ExpressionAtlas" id="P24156">
    <property type="expression patterns" value="baseline and differential"/>
</dbReference>
<dbReference type="GO" id="GO:0005743">
    <property type="term" value="C:mitochondrial inner membrane"/>
    <property type="evidence" value="ECO:0000250"/>
    <property type="project" value="FlyBase"/>
</dbReference>
<dbReference type="GO" id="GO:0035632">
    <property type="term" value="C:mitochondrial prohibitin complex"/>
    <property type="evidence" value="ECO:0000250"/>
    <property type="project" value="FlyBase"/>
</dbReference>
<dbReference type="GO" id="GO:0005739">
    <property type="term" value="C:mitochondrion"/>
    <property type="evidence" value="ECO:0007005"/>
    <property type="project" value="FlyBase"/>
</dbReference>
<dbReference type="GO" id="GO:0071456">
    <property type="term" value="P:cellular response to hypoxia"/>
    <property type="evidence" value="ECO:0000315"/>
    <property type="project" value="FlyBase"/>
</dbReference>
<dbReference type="GO" id="GO:0007005">
    <property type="term" value="P:mitochondrion organization"/>
    <property type="evidence" value="ECO:0000250"/>
    <property type="project" value="FlyBase"/>
</dbReference>
<dbReference type="CDD" id="cd03401">
    <property type="entry name" value="SPFH_prohibitin"/>
    <property type="match status" value="1"/>
</dbReference>
<dbReference type="FunFam" id="3.30.479.30:FF:000001">
    <property type="entry name" value="Prohibitin 2"/>
    <property type="match status" value="1"/>
</dbReference>
<dbReference type="Gene3D" id="3.30.479.30">
    <property type="entry name" value="Band 7 domain"/>
    <property type="match status" value="1"/>
</dbReference>
<dbReference type="InterPro" id="IPR001107">
    <property type="entry name" value="Band_7"/>
</dbReference>
<dbReference type="InterPro" id="IPR036013">
    <property type="entry name" value="Band_7/SPFH_dom_sf"/>
</dbReference>
<dbReference type="InterPro" id="IPR000163">
    <property type="entry name" value="Prohibitin"/>
</dbReference>
<dbReference type="PANTHER" id="PTHR23222">
    <property type="entry name" value="PROHIBITIN"/>
    <property type="match status" value="1"/>
</dbReference>
<dbReference type="PANTHER" id="PTHR23222:SF0">
    <property type="entry name" value="PROHIBITIN 1"/>
    <property type="match status" value="1"/>
</dbReference>
<dbReference type="Pfam" id="PF01145">
    <property type="entry name" value="Band_7"/>
    <property type="match status" value="1"/>
</dbReference>
<dbReference type="PRINTS" id="PR00679">
    <property type="entry name" value="PROHIBITIN"/>
</dbReference>
<dbReference type="SMART" id="SM00244">
    <property type="entry name" value="PHB"/>
    <property type="match status" value="1"/>
</dbReference>
<dbReference type="SUPFAM" id="SSF117892">
    <property type="entry name" value="Band 7/SPFH domain"/>
    <property type="match status" value="1"/>
</dbReference>
<proteinExistence type="evidence at transcript level"/>
<accession>P24156</accession>
<accession>Q0E8P3</accession>
<accession>Q9VIZ4</accession>
<sequence length="276" mass="30384">MAAQFFNRIGQMGLGVAVLGGVVNSALYNVEGGHRAVIFDRFTGIKENVVGEGTHFFIPWVQRPIIFDIRSQPRNVPVITGSKDLQNVNITLRILYRPIPDQLPKIYTILGQDYDERVLPSIAPEVLKAVVAQFDAGELITQREMVSQRVSQELTVRAKQFGFILDDISLTHLTFGREFTLAVEMKQVAQQEAEKARFVVEKAEQQKLASIISAEGDAEAAGLLAKSFGEAGDGLVELRRIEAAEDIAYQLSRSRGVAYLPSGQSTLLNLPSTIAQ</sequence>
<evidence type="ECO:0000269" key="1">
    <source>
    </source>
</evidence>
<evidence type="ECO:0000303" key="2">
    <source>
    </source>
</evidence>
<evidence type="ECO:0000305" key="3"/>
<evidence type="ECO:0000312" key="4">
    <source>
        <dbReference type="FlyBase" id="FBgn0002031"/>
    </source>
</evidence>
<organism>
    <name type="scientific">Drosophila melanogaster</name>
    <name type="common">Fruit fly</name>
    <dbReference type="NCBI Taxonomy" id="7227"/>
    <lineage>
        <taxon>Eukaryota</taxon>
        <taxon>Metazoa</taxon>
        <taxon>Ecdysozoa</taxon>
        <taxon>Arthropoda</taxon>
        <taxon>Hexapoda</taxon>
        <taxon>Insecta</taxon>
        <taxon>Pterygota</taxon>
        <taxon>Neoptera</taxon>
        <taxon>Endopterygota</taxon>
        <taxon>Diptera</taxon>
        <taxon>Brachycera</taxon>
        <taxon>Muscomorpha</taxon>
        <taxon>Ephydroidea</taxon>
        <taxon>Drosophilidae</taxon>
        <taxon>Drosophila</taxon>
        <taxon>Sophophora</taxon>
    </lineage>
</organism>
<feature type="chain" id="PRO_0000213881" description="Prohibitin 1">
    <location>
        <begin position="1"/>
        <end position="276"/>
    </location>
</feature>
<feature type="sequence conflict" description="In Ref. 1; CAA27807/CAA27810." evidence="3" ref="1">
    <original>V</original>
    <variation>E</variation>
    <location>
        <position position="78"/>
    </location>
</feature>
<feature type="sequence conflict" description="In Ref. 1; CAA27807/CAA27810." evidence="3" ref="1">
    <location>
        <begin position="125"/>
        <end position="143"/>
    </location>
</feature>
<feature type="sequence conflict" description="In Ref. 1; CAA27807/CAA27810." evidence="3" ref="1">
    <original>AAGLLAKSFGEAGDGLVELRRIEAAEDIAYQLS</original>
    <variation>RACVGQVIARPETVWWSLRLIDRPRYRLTSYP</variation>
    <location>
        <begin position="220"/>
        <end position="252"/>
    </location>
</feature>